<proteinExistence type="evidence at transcript level"/>
<organism>
    <name type="scientific">Rattus norvegicus</name>
    <name type="common">Rat</name>
    <dbReference type="NCBI Taxonomy" id="10116"/>
    <lineage>
        <taxon>Eukaryota</taxon>
        <taxon>Metazoa</taxon>
        <taxon>Chordata</taxon>
        <taxon>Craniata</taxon>
        <taxon>Vertebrata</taxon>
        <taxon>Euteleostomi</taxon>
        <taxon>Mammalia</taxon>
        <taxon>Eutheria</taxon>
        <taxon>Euarchontoglires</taxon>
        <taxon>Glires</taxon>
        <taxon>Rodentia</taxon>
        <taxon>Myomorpha</taxon>
        <taxon>Muroidea</taxon>
        <taxon>Muridae</taxon>
        <taxon>Murinae</taxon>
        <taxon>Rattus</taxon>
    </lineage>
</organism>
<feature type="initiator methionine" description="Removed" evidence="2">
    <location>
        <position position="1"/>
    </location>
</feature>
<feature type="chain" id="PRO_0000157155" description="MARCKS-related protein">
    <location>
        <begin position="2"/>
        <end position="199"/>
    </location>
</feature>
<feature type="region of interest" description="Disordered" evidence="3">
    <location>
        <begin position="1"/>
        <end position="199"/>
    </location>
</feature>
<feature type="region of interest" description="Effector domain involved in lipid-binding and calmodulin-binding" evidence="1">
    <location>
        <begin position="87"/>
        <end position="110"/>
    </location>
</feature>
<feature type="compositionally biased region" description="Low complexity" evidence="3">
    <location>
        <begin position="16"/>
        <end position="26"/>
    </location>
</feature>
<feature type="compositionally biased region" description="Low complexity" evidence="3">
    <location>
        <begin position="53"/>
        <end position="64"/>
    </location>
</feature>
<feature type="compositionally biased region" description="Basic and acidic residues" evidence="3">
    <location>
        <begin position="74"/>
        <end position="85"/>
    </location>
</feature>
<feature type="compositionally biased region" description="Basic residues" evidence="3">
    <location>
        <begin position="86"/>
        <end position="98"/>
    </location>
</feature>
<feature type="compositionally biased region" description="Low complexity" evidence="3">
    <location>
        <begin position="175"/>
        <end position="199"/>
    </location>
</feature>
<feature type="modified residue" description="Phosphothreonine" evidence="2">
    <location>
        <position position="14"/>
    </location>
</feature>
<feature type="modified residue" description="Phosphoserine" evidence="2">
    <location>
        <position position="22"/>
    </location>
</feature>
<feature type="modified residue" description="Phosphoserine" evidence="2">
    <location>
        <position position="36"/>
    </location>
</feature>
<feature type="modified residue" description="Phosphoserine" evidence="1">
    <location>
        <position position="48"/>
    </location>
</feature>
<feature type="modified residue" description="Phosphoserine" evidence="2">
    <location>
        <position position="71"/>
    </location>
</feature>
<feature type="modified residue" description="Phosphothreonine" evidence="2">
    <location>
        <position position="85"/>
    </location>
</feature>
<feature type="modified residue" description="Phosphoserine; by PKC" evidence="2">
    <location>
        <position position="93"/>
    </location>
</feature>
<feature type="modified residue" description="Phosphoserine; by PKC" evidence="2">
    <location>
        <position position="101"/>
    </location>
</feature>
<feature type="modified residue" description="Phosphoserine; by PKC" evidence="2">
    <location>
        <position position="104"/>
    </location>
</feature>
<feature type="modified residue" description="Phosphoserine" evidence="1">
    <location>
        <position position="119"/>
    </location>
</feature>
<feature type="modified residue" description="Phosphoserine; by MAPK8" evidence="1">
    <location>
        <position position="120"/>
    </location>
</feature>
<feature type="modified residue" description="Phosphoserine" evidence="1">
    <location>
        <position position="132"/>
    </location>
</feature>
<feature type="modified residue" description="Phosphoserine" evidence="1">
    <location>
        <position position="135"/>
    </location>
</feature>
<feature type="modified residue" description="Phosphothreonine; by MAPK8" evidence="1">
    <location>
        <position position="148"/>
    </location>
</feature>
<feature type="modified residue" description="Phosphoserine" evidence="2">
    <location>
        <position position="151"/>
    </location>
</feature>
<feature type="modified residue" description="Phosphoserine" evidence="1">
    <location>
        <position position="162"/>
    </location>
</feature>
<feature type="modified residue" description="Phosphoserine" evidence="2">
    <location>
        <position position="165"/>
    </location>
</feature>
<feature type="modified residue" description="Phosphothreonine; by MAPK8" evidence="1">
    <location>
        <position position="183"/>
    </location>
</feature>
<feature type="lipid moiety-binding region" description="N-myristoyl glycine" evidence="2">
    <location>
        <position position="2"/>
    </location>
</feature>
<dbReference type="EMBL" id="AJ301677">
    <property type="protein sequence ID" value="CAC18528.1"/>
    <property type="molecule type" value="mRNA"/>
</dbReference>
<dbReference type="EMBL" id="BC081789">
    <property type="protein sequence ID" value="AAH81789.1"/>
    <property type="molecule type" value="mRNA"/>
</dbReference>
<dbReference type="RefSeq" id="NP_110489.1">
    <property type="nucleotide sequence ID" value="NM_030862.2"/>
</dbReference>
<dbReference type="BioGRID" id="249517">
    <property type="interactions" value="1"/>
</dbReference>
<dbReference type="FunCoup" id="Q9EPH2">
    <property type="interactions" value="821"/>
</dbReference>
<dbReference type="STRING" id="10116.ENSRNOP00000012663"/>
<dbReference type="GlyGen" id="Q9EPH2">
    <property type="glycosylation" value="1 site"/>
</dbReference>
<dbReference type="iPTMnet" id="Q9EPH2"/>
<dbReference type="PhosphoSitePlus" id="Q9EPH2"/>
<dbReference type="PaxDb" id="10116-ENSRNOP00000012663"/>
<dbReference type="Ensembl" id="ENSRNOT00000012663.8">
    <property type="protein sequence ID" value="ENSRNOP00000012663.4"/>
    <property type="gene ID" value="ENSRNOG00000009113.8"/>
</dbReference>
<dbReference type="Ensembl" id="ENSRNOT00000111046.1">
    <property type="protein sequence ID" value="ENSRNOP00000087964.1"/>
    <property type="gene ID" value="ENSRNOG00000066033.1"/>
</dbReference>
<dbReference type="GeneID" id="81520"/>
<dbReference type="KEGG" id="rno:81520"/>
<dbReference type="AGR" id="RGD:621197"/>
<dbReference type="CTD" id="65108"/>
<dbReference type="RGD" id="621197">
    <property type="gene designation" value="Marcksl1"/>
</dbReference>
<dbReference type="eggNOG" id="ENOG502RYXK">
    <property type="taxonomic scope" value="Eukaryota"/>
</dbReference>
<dbReference type="GeneTree" id="ENSGT00730000111349"/>
<dbReference type="HOGENOM" id="CLU_073091_1_0_1"/>
<dbReference type="InParanoid" id="Q9EPH2"/>
<dbReference type="OMA" id="PPIMGSQ"/>
<dbReference type="OrthoDB" id="9948538at2759"/>
<dbReference type="PhylomeDB" id="Q9EPH2"/>
<dbReference type="TreeFam" id="TF332815"/>
<dbReference type="PRO" id="PR:Q9EPH2"/>
<dbReference type="Proteomes" id="UP000002494">
    <property type="component" value="Chromosome 1"/>
</dbReference>
<dbReference type="Proteomes" id="UP000002494">
    <property type="component" value="Chromosome 5"/>
</dbReference>
<dbReference type="Bgee" id="ENSRNOG00000009113">
    <property type="expression patterns" value="Expressed in ovary and 18 other cell types or tissues"/>
</dbReference>
<dbReference type="GO" id="GO:0005737">
    <property type="term" value="C:cytoplasm"/>
    <property type="evidence" value="ECO:0000318"/>
    <property type="project" value="GO_Central"/>
</dbReference>
<dbReference type="GO" id="GO:0005856">
    <property type="term" value="C:cytoskeleton"/>
    <property type="evidence" value="ECO:0007669"/>
    <property type="project" value="UniProtKB-SubCell"/>
</dbReference>
<dbReference type="GO" id="GO:0005886">
    <property type="term" value="C:plasma membrane"/>
    <property type="evidence" value="ECO:0000318"/>
    <property type="project" value="GO_Central"/>
</dbReference>
<dbReference type="GO" id="GO:0099523">
    <property type="term" value="C:presynaptic cytosol"/>
    <property type="evidence" value="ECO:0000314"/>
    <property type="project" value="SynGO"/>
</dbReference>
<dbReference type="GO" id="GO:0042734">
    <property type="term" value="C:presynaptic membrane"/>
    <property type="evidence" value="ECO:0000314"/>
    <property type="project" value="SynGO"/>
</dbReference>
<dbReference type="GO" id="GO:0008021">
    <property type="term" value="C:synaptic vesicle"/>
    <property type="evidence" value="ECO:0000314"/>
    <property type="project" value="SynGO"/>
</dbReference>
<dbReference type="GO" id="GO:0051015">
    <property type="term" value="F:actin filament binding"/>
    <property type="evidence" value="ECO:0000318"/>
    <property type="project" value="GO_Central"/>
</dbReference>
<dbReference type="GO" id="GO:0005516">
    <property type="term" value="F:calmodulin binding"/>
    <property type="evidence" value="ECO:0007669"/>
    <property type="project" value="UniProtKB-KW"/>
</dbReference>
<dbReference type="GO" id="GO:0007015">
    <property type="term" value="P:actin filament organization"/>
    <property type="evidence" value="ECO:0000318"/>
    <property type="project" value="GO_Central"/>
</dbReference>
<dbReference type="GO" id="GO:0008283">
    <property type="term" value="P:cell population proliferation"/>
    <property type="evidence" value="ECO:0000266"/>
    <property type="project" value="RGD"/>
</dbReference>
<dbReference type="GO" id="GO:0007417">
    <property type="term" value="P:central nervous system development"/>
    <property type="evidence" value="ECO:0000318"/>
    <property type="project" value="GO_Central"/>
</dbReference>
<dbReference type="GO" id="GO:0008284">
    <property type="term" value="P:positive regulation of cell population proliferation"/>
    <property type="evidence" value="ECO:0000266"/>
    <property type="project" value="RGD"/>
</dbReference>
<dbReference type="GO" id="GO:0099509">
    <property type="term" value="P:regulation of presynaptic cytosolic calcium ion concentration"/>
    <property type="evidence" value="ECO:0000314"/>
    <property type="project" value="SynGO"/>
</dbReference>
<dbReference type="InterPro" id="IPR002101">
    <property type="entry name" value="MARCKS"/>
</dbReference>
<dbReference type="PANTHER" id="PTHR14353:SF8">
    <property type="entry name" value="MARCKS-RELATED PROTEIN"/>
    <property type="match status" value="1"/>
</dbReference>
<dbReference type="PANTHER" id="PTHR14353">
    <property type="entry name" value="MYRISTOYLATED ALANINE-RICH C-KINASE SUBSTRATE MARCKS"/>
    <property type="match status" value="1"/>
</dbReference>
<dbReference type="Pfam" id="PF02063">
    <property type="entry name" value="MARCKS"/>
    <property type="match status" value="2"/>
</dbReference>
<dbReference type="PRINTS" id="PR00963">
    <property type="entry name" value="MARCKS"/>
</dbReference>
<dbReference type="PROSITE" id="PS00826">
    <property type="entry name" value="MARCKS_1"/>
    <property type="match status" value="1"/>
</dbReference>
<dbReference type="PROSITE" id="PS00827">
    <property type="entry name" value="MARCKS_2"/>
    <property type="match status" value="1"/>
</dbReference>
<reference key="1">
    <citation type="submission" date="2000-12" db="EMBL/GenBank/DDBJ databases">
        <title>Rat Mac-MARCKS protein.</title>
        <authorList>
            <person name="Jess U."/>
            <person name="El Far O."/>
            <person name="Betz H."/>
        </authorList>
    </citation>
    <scope>NUCLEOTIDE SEQUENCE [MRNA]</scope>
</reference>
<reference key="2">
    <citation type="journal article" date="2004" name="Genome Res.">
        <title>The status, quality, and expansion of the NIH full-length cDNA project: the Mammalian Gene Collection (MGC).</title>
        <authorList>
            <consortium name="The MGC Project Team"/>
        </authorList>
    </citation>
    <scope>NUCLEOTIDE SEQUENCE [LARGE SCALE MRNA]</scope>
    <source>
        <tissue>Testis</tissue>
    </source>
</reference>
<evidence type="ECO:0000250" key="1">
    <source>
        <dbReference type="UniProtKB" id="P28667"/>
    </source>
</evidence>
<evidence type="ECO:0000250" key="2">
    <source>
        <dbReference type="UniProtKB" id="P49006"/>
    </source>
</evidence>
<evidence type="ECO:0000256" key="3">
    <source>
        <dbReference type="SAM" id="MobiDB-lite"/>
    </source>
</evidence>
<evidence type="ECO:0000305" key="4"/>
<gene>
    <name type="primary">Marcksl1</name>
    <name type="synonym">Mlp</name>
</gene>
<sequence length="199" mass="19847">MGSQSSKAPRGDVTAEEAAGASPAKANGQENGHVKSNGDLTPKGEGESPPVNGADEAAGATGDAIEPAPPSQEAEAKGEVAPKETPKKKKKFSFKKPFKLSGLSFKRNRKEGGGDSSASSPTEEEQEQGEISACSDEGTAQEGKAAATPESQEPQAKGAEASAVSKGGDAEEEAGPQAAEPSTPSGPESGPASASAENE</sequence>
<keyword id="KW-0009">Actin-binding</keyword>
<keyword id="KW-0112">Calmodulin-binding</keyword>
<keyword id="KW-1003">Cell membrane</keyword>
<keyword id="KW-0963">Cytoplasm</keyword>
<keyword id="KW-0206">Cytoskeleton</keyword>
<keyword id="KW-0449">Lipoprotein</keyword>
<keyword id="KW-0472">Membrane</keyword>
<keyword id="KW-0519">Myristate</keyword>
<keyword id="KW-0597">Phosphoprotein</keyword>
<keyword id="KW-1185">Reference proteome</keyword>
<name>MRP_RAT</name>
<comment type="function">
    <text evidence="1 2">Controls cell movement by regulating actin cytoskeleton homeostasis and filopodium and lamellipodium formation. When unphosphorylated, induces cell migration. When phosphorylated by MAPK8, induces actin bundles formation and stabilization, thereby reducing actin plasticity, hence restricting cell movement, including neuronal migration. May be involved in coupling the protein kinase C and calmodulin signal transduction systems.</text>
</comment>
<comment type="subunit">
    <text evidence="1">Binds to filamentous actin (F-actin), but not to monomeric G-actin, independently of its phosphorylation status. Interacts with calmodulin.</text>
</comment>
<comment type="subcellular location">
    <subcellularLocation>
        <location evidence="1">Cytoplasm</location>
        <location evidence="1">Cytoskeleton</location>
    </subcellularLocation>
    <subcellularLocation>
        <location evidence="1">Cell membrane</location>
        <topology evidence="1">Lipid-anchor</topology>
    </subcellularLocation>
    <text evidence="1 2">Associates with the membrane via the insertion of the N-terminal N-myristoyl chain and the partial insertion of the effector domain. Association of the effector domain with membranes may be regulated by Ca(2+)/calmodulin. Colocalizes with F-actin at the leading edge of migrating cells.</text>
</comment>
<comment type="PTM">
    <text evidence="1">Phosphorylated. Phosphorylation at Ser-120 and Thr-183 is non-redundantly catalyzed by MAPK8 in vivo. Phosphorylation at Thr-148 is preferentially catalyzed by MAPK8 in vivo, but this modification can also be catalyzed by other kinases in the absence of MAPK8. May be phosphorylated by protein kinase C, which disrupts the interaction with calmodulin.</text>
</comment>
<comment type="similarity">
    <text evidence="4">Belongs to the MARCKS family.</text>
</comment>
<accession>Q9EPH2</accession>
<protein>
    <recommendedName>
        <fullName>MARCKS-related protein</fullName>
    </recommendedName>
    <alternativeName>
        <fullName>Brain protein F52</fullName>
    </alternativeName>
    <alternativeName>
        <fullName>MARCKS-like protein 1</fullName>
    </alternativeName>
    <alternativeName>
        <fullName>Macrophage myristoylated alanine-rich C kinase substrate</fullName>
        <shortName>Mac-MARCKS</shortName>
        <shortName>MacMARCKS</shortName>
    </alternativeName>
</protein>